<comment type="function">
    <text evidence="1">Removes the pyruvyl group from chorismate, with concomitant aromatization of the ring, to provide 4-hydroxybenzoate (4HB) for the ubiquinone pathway.</text>
</comment>
<comment type="catalytic activity">
    <reaction evidence="1">
        <text>chorismate = 4-hydroxybenzoate + pyruvate</text>
        <dbReference type="Rhea" id="RHEA:16505"/>
        <dbReference type="ChEBI" id="CHEBI:15361"/>
        <dbReference type="ChEBI" id="CHEBI:17879"/>
        <dbReference type="ChEBI" id="CHEBI:29748"/>
        <dbReference type="EC" id="4.1.3.40"/>
    </reaction>
</comment>
<comment type="pathway">
    <text evidence="1">Cofactor biosynthesis; ubiquinone biosynthesis.</text>
</comment>
<comment type="subcellular location">
    <subcellularLocation>
        <location evidence="1">Cytoplasm</location>
    </subcellularLocation>
</comment>
<comment type="similarity">
    <text evidence="1">Belongs to the UbiC family.</text>
</comment>
<feature type="chain" id="PRO_0000240578" description="Probable chorismate pyruvate-lyase">
    <location>
        <begin position="1"/>
        <end position="187"/>
    </location>
</feature>
<feature type="binding site" evidence="1">
    <location>
        <position position="81"/>
    </location>
    <ligand>
        <name>substrate</name>
    </ligand>
</feature>
<feature type="binding site" evidence="1">
    <location>
        <position position="119"/>
    </location>
    <ligand>
        <name>substrate</name>
    </ligand>
</feature>
<feature type="binding site" evidence="1">
    <location>
        <position position="178"/>
    </location>
    <ligand>
        <name>substrate</name>
    </ligand>
</feature>
<keyword id="KW-0963">Cytoplasm</keyword>
<keyword id="KW-0456">Lyase</keyword>
<keyword id="KW-0670">Pyruvate</keyword>
<keyword id="KW-1185">Reference proteome</keyword>
<keyword id="KW-0831">Ubiquinone biosynthesis</keyword>
<evidence type="ECO:0000255" key="1">
    <source>
        <dbReference type="HAMAP-Rule" id="MF_01632"/>
    </source>
</evidence>
<name>UBIC_THIDA</name>
<proteinExistence type="inferred from homology"/>
<protein>
    <recommendedName>
        <fullName evidence="1">Probable chorismate pyruvate-lyase</fullName>
        <shortName evidence="1">CL</shortName>
        <shortName evidence="1">CPL</shortName>
        <ecNumber evidence="1">4.1.3.40</ecNumber>
    </recommendedName>
</protein>
<dbReference type="EC" id="4.1.3.40" evidence="1"/>
<dbReference type="EMBL" id="CP000116">
    <property type="protein sequence ID" value="AAZ96417.1"/>
    <property type="molecule type" value="Genomic_DNA"/>
</dbReference>
<dbReference type="RefSeq" id="WP_011310976.1">
    <property type="nucleotide sequence ID" value="NC_007404.1"/>
</dbReference>
<dbReference type="SMR" id="Q3SLJ3"/>
<dbReference type="STRING" id="292415.Tbd_0464"/>
<dbReference type="KEGG" id="tbd:Tbd_0464"/>
<dbReference type="eggNOG" id="COG3161">
    <property type="taxonomic scope" value="Bacteria"/>
</dbReference>
<dbReference type="HOGENOM" id="CLU_096824_2_1_4"/>
<dbReference type="OrthoDB" id="8606430at2"/>
<dbReference type="UniPathway" id="UPA00232"/>
<dbReference type="Proteomes" id="UP000008291">
    <property type="component" value="Chromosome"/>
</dbReference>
<dbReference type="GO" id="GO:0005829">
    <property type="term" value="C:cytosol"/>
    <property type="evidence" value="ECO:0007669"/>
    <property type="project" value="TreeGrafter"/>
</dbReference>
<dbReference type="GO" id="GO:0008813">
    <property type="term" value="F:chorismate lyase activity"/>
    <property type="evidence" value="ECO:0007669"/>
    <property type="project" value="UniProtKB-UniRule"/>
</dbReference>
<dbReference type="GO" id="GO:0042866">
    <property type="term" value="P:pyruvate biosynthetic process"/>
    <property type="evidence" value="ECO:0007669"/>
    <property type="project" value="UniProtKB-UniRule"/>
</dbReference>
<dbReference type="GO" id="GO:0006744">
    <property type="term" value="P:ubiquinone biosynthetic process"/>
    <property type="evidence" value="ECO:0007669"/>
    <property type="project" value="UniProtKB-UniRule"/>
</dbReference>
<dbReference type="Gene3D" id="3.40.1410.10">
    <property type="entry name" value="Chorismate lyase-like"/>
    <property type="match status" value="1"/>
</dbReference>
<dbReference type="HAMAP" id="MF_01632">
    <property type="entry name" value="UbiC"/>
    <property type="match status" value="1"/>
</dbReference>
<dbReference type="InterPro" id="IPR007440">
    <property type="entry name" value="Chorismate--pyruvate_lyase"/>
</dbReference>
<dbReference type="InterPro" id="IPR028978">
    <property type="entry name" value="Chorismate_lyase_/UTRA_dom_sf"/>
</dbReference>
<dbReference type="PANTHER" id="PTHR38683">
    <property type="entry name" value="CHORISMATE PYRUVATE-LYASE"/>
    <property type="match status" value="1"/>
</dbReference>
<dbReference type="PANTHER" id="PTHR38683:SF1">
    <property type="entry name" value="CHORISMATE PYRUVATE-LYASE"/>
    <property type="match status" value="1"/>
</dbReference>
<dbReference type="Pfam" id="PF04345">
    <property type="entry name" value="Chor_lyase"/>
    <property type="match status" value="1"/>
</dbReference>
<dbReference type="SUPFAM" id="SSF64288">
    <property type="entry name" value="Chorismate lyase-like"/>
    <property type="match status" value="1"/>
</dbReference>
<accession>Q3SLJ3</accession>
<organism>
    <name type="scientific">Thiobacillus denitrificans (strain ATCC 25259 / T1)</name>
    <dbReference type="NCBI Taxonomy" id="292415"/>
    <lineage>
        <taxon>Bacteria</taxon>
        <taxon>Pseudomonadati</taxon>
        <taxon>Pseudomonadota</taxon>
        <taxon>Betaproteobacteria</taxon>
        <taxon>Nitrosomonadales</taxon>
        <taxon>Thiobacillaceae</taxon>
        <taxon>Thiobacillus</taxon>
    </lineage>
</organism>
<sequence>MIATRDDVCRQAGLQYGWLPHAFQAPRTLRGWLSDRGSLTQRLRSRYRDFRVLPVLRGVAAPFPDESGALGLARDASAYVRDVLLLGDGKARVFAHSVLPRAALRGGWNGIARLGTRPLGEALFRTPRVRRLAMTMRRVDARHPLYCAARRHAEVAERALWARRSVFCLDGHPLLVSEVFLPALLTP</sequence>
<gene>
    <name evidence="1" type="primary">ubiC</name>
    <name type="ordered locus">Tbd_0464</name>
</gene>
<reference key="1">
    <citation type="journal article" date="2006" name="J. Bacteriol.">
        <title>The genome sequence of the obligately chemolithoautotrophic, facultatively anaerobic bacterium Thiobacillus denitrificans.</title>
        <authorList>
            <person name="Beller H.R."/>
            <person name="Chain P.S."/>
            <person name="Letain T.E."/>
            <person name="Chakicherla A."/>
            <person name="Larimer F.W."/>
            <person name="Richardson P.M."/>
            <person name="Coleman M.A."/>
            <person name="Wood A.P."/>
            <person name="Kelly D.P."/>
        </authorList>
    </citation>
    <scope>NUCLEOTIDE SEQUENCE [LARGE SCALE GENOMIC DNA]</scope>
    <source>
        <strain>ATCC 25259 / T1</strain>
    </source>
</reference>